<accession>Q889F6</accession>
<proteinExistence type="inferred from homology"/>
<evidence type="ECO:0000255" key="1">
    <source>
        <dbReference type="HAMAP-Rule" id="MF_01622"/>
    </source>
</evidence>
<gene>
    <name evidence="1" type="primary">selU</name>
    <name type="ordered locus">PSPTO_0794</name>
</gene>
<keyword id="KW-1185">Reference proteome</keyword>
<keyword id="KW-0711">Selenium</keyword>
<keyword id="KW-0808">Transferase</keyword>
<feature type="chain" id="PRO_0000210869" description="tRNA 2-selenouridine synthase">
    <location>
        <begin position="1"/>
        <end position="366"/>
    </location>
</feature>
<feature type="domain" description="Rhodanese" evidence="1">
    <location>
        <begin position="12"/>
        <end position="135"/>
    </location>
</feature>
<feature type="active site" description="S-selanylcysteine intermediate" evidence="1">
    <location>
        <position position="95"/>
    </location>
</feature>
<organism>
    <name type="scientific">Pseudomonas syringae pv. tomato (strain ATCC BAA-871 / DC3000)</name>
    <dbReference type="NCBI Taxonomy" id="223283"/>
    <lineage>
        <taxon>Bacteria</taxon>
        <taxon>Pseudomonadati</taxon>
        <taxon>Pseudomonadota</taxon>
        <taxon>Gammaproteobacteria</taxon>
        <taxon>Pseudomonadales</taxon>
        <taxon>Pseudomonadaceae</taxon>
        <taxon>Pseudomonas</taxon>
    </lineage>
</organism>
<sequence>MADNSSDYRALFLNDVPMMDARAPVEFSKGAFPGVINLPLMNDIERQKVGTCYKQHGQDAAIQLGHQLVCGQVKDERVEAWVEFARANPNGYLYCFRGGLRSQTVQRWLKDAGVDYPRILGGYKAMRTFLLDTLHEAVTECDLVVLGGMTGTGKTEVLTQLPNGLDLEGVANHRGSSFGKRATGQPAQIDFENRLAINLLKKRAAGIEQFVVEDESRLVGSCNVPLELHQAMQGCPVVWLEDSFEHRVERILADYVVNLCAEFISVKGEELGFGLFADRLLQSLNNIHKRLGGERHQRLLALMQTALEEQQRSGAVELHRGWIEGLLGEYYDPMYAYQREHKAARIEFAGNQFEVSGYLSERSSRR</sequence>
<comment type="function">
    <text evidence="1">Involved in the post-transcriptional modification of the uridine at the wobble position (U34) of tRNA(Lys), tRNA(Glu) and tRNA(Gln). Catalyzes the conversion of 2-thiouridine (S2U-RNA) to 2-selenouridine (Se2U-RNA). Acts in a two-step process involving geranylation of 2-thiouridine (S2U) to S-geranyl-2-thiouridine (geS2U) and subsequent selenation of the latter derivative to 2-selenouridine (Se2U) in the tRNA chain.</text>
</comment>
<comment type="catalytic activity">
    <reaction evidence="1">
        <text>5-methylaminomethyl-2-thiouridine(34) in tRNA + selenophosphate + (2E)-geranyl diphosphate + H2O + H(+) = 5-methylaminomethyl-2-selenouridine(34) in tRNA + (2E)-thiogeraniol + phosphate + diphosphate</text>
        <dbReference type="Rhea" id="RHEA:42716"/>
        <dbReference type="Rhea" id="RHEA-COMP:10195"/>
        <dbReference type="Rhea" id="RHEA-COMP:10196"/>
        <dbReference type="ChEBI" id="CHEBI:15377"/>
        <dbReference type="ChEBI" id="CHEBI:15378"/>
        <dbReference type="ChEBI" id="CHEBI:16144"/>
        <dbReference type="ChEBI" id="CHEBI:33019"/>
        <dbReference type="ChEBI" id="CHEBI:43474"/>
        <dbReference type="ChEBI" id="CHEBI:58057"/>
        <dbReference type="ChEBI" id="CHEBI:74455"/>
        <dbReference type="ChEBI" id="CHEBI:82743"/>
        <dbReference type="ChEBI" id="CHEBI:143703"/>
        <dbReference type="EC" id="2.9.1.3"/>
    </reaction>
    <physiologicalReaction direction="left-to-right" evidence="1">
        <dbReference type="Rhea" id="RHEA:42717"/>
    </physiologicalReaction>
</comment>
<comment type="catalytic activity">
    <reaction evidence="1">
        <text>5-methylaminomethyl-2-thiouridine(34) in tRNA + (2E)-geranyl diphosphate = 5-methylaminomethyl-S-(2E)-geranyl-thiouridine(34) in tRNA + diphosphate</text>
        <dbReference type="Rhea" id="RHEA:14085"/>
        <dbReference type="Rhea" id="RHEA-COMP:10195"/>
        <dbReference type="Rhea" id="RHEA-COMP:14654"/>
        <dbReference type="ChEBI" id="CHEBI:33019"/>
        <dbReference type="ChEBI" id="CHEBI:58057"/>
        <dbReference type="ChEBI" id="CHEBI:74455"/>
        <dbReference type="ChEBI" id="CHEBI:140632"/>
    </reaction>
    <physiologicalReaction direction="left-to-right" evidence="1">
        <dbReference type="Rhea" id="RHEA:14086"/>
    </physiologicalReaction>
</comment>
<comment type="catalytic activity">
    <reaction evidence="1">
        <text>5-methylaminomethyl-S-(2E)-geranyl-thiouridine(34) in tRNA + selenophosphate + H(+) = 5-methylaminomethyl-2-(Se-phospho)selenouridine(34) in tRNA + (2E)-thiogeraniol</text>
        <dbReference type="Rhea" id="RHEA:60172"/>
        <dbReference type="Rhea" id="RHEA-COMP:14654"/>
        <dbReference type="Rhea" id="RHEA-COMP:15523"/>
        <dbReference type="ChEBI" id="CHEBI:15378"/>
        <dbReference type="ChEBI" id="CHEBI:16144"/>
        <dbReference type="ChEBI" id="CHEBI:140632"/>
        <dbReference type="ChEBI" id="CHEBI:143702"/>
        <dbReference type="ChEBI" id="CHEBI:143703"/>
    </reaction>
    <physiologicalReaction direction="left-to-right" evidence="1">
        <dbReference type="Rhea" id="RHEA:60173"/>
    </physiologicalReaction>
</comment>
<comment type="catalytic activity">
    <reaction evidence="1">
        <text>5-methylaminomethyl-2-(Se-phospho)selenouridine(34) in tRNA + H2O = 5-methylaminomethyl-2-selenouridine(34) in tRNA + phosphate</text>
        <dbReference type="Rhea" id="RHEA:60176"/>
        <dbReference type="Rhea" id="RHEA-COMP:10196"/>
        <dbReference type="Rhea" id="RHEA-COMP:15523"/>
        <dbReference type="ChEBI" id="CHEBI:15377"/>
        <dbReference type="ChEBI" id="CHEBI:43474"/>
        <dbReference type="ChEBI" id="CHEBI:82743"/>
        <dbReference type="ChEBI" id="CHEBI:143702"/>
    </reaction>
    <physiologicalReaction direction="left-to-right" evidence="1">
        <dbReference type="Rhea" id="RHEA:60177"/>
    </physiologicalReaction>
</comment>
<comment type="subunit">
    <text evidence="1">Monomer.</text>
</comment>
<comment type="similarity">
    <text evidence="1">Belongs to the SelU family.</text>
</comment>
<dbReference type="EC" id="2.9.1.3" evidence="1"/>
<dbReference type="EMBL" id="AE016853">
    <property type="protein sequence ID" value="AAO54336.1"/>
    <property type="molecule type" value="Genomic_DNA"/>
</dbReference>
<dbReference type="RefSeq" id="NP_790641.1">
    <property type="nucleotide sequence ID" value="NC_004578.1"/>
</dbReference>
<dbReference type="RefSeq" id="WP_011103288.1">
    <property type="nucleotide sequence ID" value="NC_004578.1"/>
</dbReference>
<dbReference type="SMR" id="Q889F6"/>
<dbReference type="STRING" id="223283.PSPTO_0794"/>
<dbReference type="DNASU" id="1182419"/>
<dbReference type="GeneID" id="1182419"/>
<dbReference type="KEGG" id="pst:PSPTO_0794"/>
<dbReference type="PATRIC" id="fig|223283.9.peg.807"/>
<dbReference type="eggNOG" id="COG2603">
    <property type="taxonomic scope" value="Bacteria"/>
</dbReference>
<dbReference type="HOGENOM" id="CLU_043456_1_0_6"/>
<dbReference type="OrthoDB" id="9808735at2"/>
<dbReference type="PhylomeDB" id="Q889F6"/>
<dbReference type="Proteomes" id="UP000002515">
    <property type="component" value="Chromosome"/>
</dbReference>
<dbReference type="GO" id="GO:0016765">
    <property type="term" value="F:transferase activity, transferring alkyl or aryl (other than methyl) groups"/>
    <property type="evidence" value="ECO:0007669"/>
    <property type="project" value="UniProtKB-UniRule"/>
</dbReference>
<dbReference type="GO" id="GO:0043828">
    <property type="term" value="F:tRNA 2-selenouridine synthase activity"/>
    <property type="evidence" value="ECO:0007669"/>
    <property type="project" value="UniProtKB-EC"/>
</dbReference>
<dbReference type="GO" id="GO:0002098">
    <property type="term" value="P:tRNA wobble uridine modification"/>
    <property type="evidence" value="ECO:0007669"/>
    <property type="project" value="UniProtKB-UniRule"/>
</dbReference>
<dbReference type="CDD" id="cd01520">
    <property type="entry name" value="RHOD_YbbB"/>
    <property type="match status" value="1"/>
</dbReference>
<dbReference type="Gene3D" id="3.40.250.10">
    <property type="entry name" value="Rhodanese-like domain"/>
    <property type="match status" value="1"/>
</dbReference>
<dbReference type="HAMAP" id="MF_01622">
    <property type="entry name" value="tRNA_sel_U_synth"/>
    <property type="match status" value="1"/>
</dbReference>
<dbReference type="InterPro" id="IPR001763">
    <property type="entry name" value="Rhodanese-like_dom"/>
</dbReference>
<dbReference type="InterPro" id="IPR036873">
    <property type="entry name" value="Rhodanese-like_dom_sf"/>
</dbReference>
<dbReference type="InterPro" id="IPR017582">
    <property type="entry name" value="SelU"/>
</dbReference>
<dbReference type="NCBIfam" id="NF008750">
    <property type="entry name" value="PRK11784.1-2"/>
    <property type="match status" value="1"/>
</dbReference>
<dbReference type="NCBIfam" id="NF008751">
    <property type="entry name" value="PRK11784.1-3"/>
    <property type="match status" value="1"/>
</dbReference>
<dbReference type="NCBIfam" id="TIGR03167">
    <property type="entry name" value="tRNA_sel_U_synt"/>
    <property type="match status" value="1"/>
</dbReference>
<dbReference type="PANTHER" id="PTHR30401">
    <property type="entry name" value="TRNA 2-SELENOURIDINE SYNTHASE"/>
    <property type="match status" value="1"/>
</dbReference>
<dbReference type="PANTHER" id="PTHR30401:SF0">
    <property type="entry name" value="TRNA 2-SELENOURIDINE SYNTHASE"/>
    <property type="match status" value="1"/>
</dbReference>
<dbReference type="SMART" id="SM00450">
    <property type="entry name" value="RHOD"/>
    <property type="match status" value="1"/>
</dbReference>
<dbReference type="SUPFAM" id="SSF52821">
    <property type="entry name" value="Rhodanese/Cell cycle control phosphatase"/>
    <property type="match status" value="1"/>
</dbReference>
<dbReference type="PROSITE" id="PS50206">
    <property type="entry name" value="RHODANESE_3"/>
    <property type="match status" value="1"/>
</dbReference>
<reference key="1">
    <citation type="journal article" date="2003" name="Proc. Natl. Acad. Sci. U.S.A.">
        <title>The complete genome sequence of the Arabidopsis and tomato pathogen Pseudomonas syringae pv. tomato DC3000.</title>
        <authorList>
            <person name="Buell C.R."/>
            <person name="Joardar V."/>
            <person name="Lindeberg M."/>
            <person name="Selengut J."/>
            <person name="Paulsen I.T."/>
            <person name="Gwinn M.L."/>
            <person name="Dodson R.J."/>
            <person name="DeBoy R.T."/>
            <person name="Durkin A.S."/>
            <person name="Kolonay J.F."/>
            <person name="Madupu R."/>
            <person name="Daugherty S.C."/>
            <person name="Brinkac L.M."/>
            <person name="Beanan M.J."/>
            <person name="Haft D.H."/>
            <person name="Nelson W.C."/>
            <person name="Davidsen T.M."/>
            <person name="Zafar N."/>
            <person name="Zhou L."/>
            <person name="Liu J."/>
            <person name="Yuan Q."/>
            <person name="Khouri H.M."/>
            <person name="Fedorova N.B."/>
            <person name="Tran B."/>
            <person name="Russell D."/>
            <person name="Berry K.J."/>
            <person name="Utterback T.R."/>
            <person name="Van Aken S.E."/>
            <person name="Feldblyum T.V."/>
            <person name="D'Ascenzo M."/>
            <person name="Deng W.-L."/>
            <person name="Ramos A.R."/>
            <person name="Alfano J.R."/>
            <person name="Cartinhour S."/>
            <person name="Chatterjee A.K."/>
            <person name="Delaney T.P."/>
            <person name="Lazarowitz S.G."/>
            <person name="Martin G.B."/>
            <person name="Schneider D.J."/>
            <person name="Tang X."/>
            <person name="Bender C.L."/>
            <person name="White O."/>
            <person name="Fraser C.M."/>
            <person name="Collmer A."/>
        </authorList>
    </citation>
    <scope>NUCLEOTIDE SEQUENCE [LARGE SCALE GENOMIC DNA]</scope>
    <source>
        <strain>ATCC BAA-871 / DC3000</strain>
    </source>
</reference>
<name>SELU_PSESM</name>
<protein>
    <recommendedName>
        <fullName evidence="1">tRNA 2-selenouridine synthase</fullName>
        <ecNumber evidence="1">2.9.1.3</ecNumber>
    </recommendedName>
</protein>